<sequence length="210" mass="22837">MSSAKELKKSVLAPVLDNNPIALQVLGVCSALAVTTKLETAFVMTLAVMFVTALSNFFVSLIRNHIPNSVRIIVQMAIIASLVIVVDQILKAYLYDISKQLSVFVGLIITNCIVMGRAEAFAMKSEPIPSFIDGIGNGLGYGFVLMTVGFFRELLGSGKLFGLEVLPLISNGGWYQPNGLMLLAPSAFFLIGFMIWAIRTFKPEQVEAKE</sequence>
<comment type="function">
    <text evidence="1">NQR complex catalyzes the reduction of ubiquinone-1 to ubiquinol by two successive reactions, coupled with the transport of Na(+) ions from the cytoplasm to the periplasm. NqrA to NqrE are probably involved in the second step, the conversion of ubisemiquinone to ubiquinol.</text>
</comment>
<comment type="catalytic activity">
    <reaction evidence="1">
        <text>a ubiquinone + n Na(+)(in) + NADH + H(+) = a ubiquinol + n Na(+)(out) + NAD(+)</text>
        <dbReference type="Rhea" id="RHEA:47748"/>
        <dbReference type="Rhea" id="RHEA-COMP:9565"/>
        <dbReference type="Rhea" id="RHEA-COMP:9566"/>
        <dbReference type="ChEBI" id="CHEBI:15378"/>
        <dbReference type="ChEBI" id="CHEBI:16389"/>
        <dbReference type="ChEBI" id="CHEBI:17976"/>
        <dbReference type="ChEBI" id="CHEBI:29101"/>
        <dbReference type="ChEBI" id="CHEBI:57540"/>
        <dbReference type="ChEBI" id="CHEBI:57945"/>
        <dbReference type="EC" id="7.2.1.1"/>
    </reaction>
</comment>
<comment type="subunit">
    <text evidence="1">Composed of six subunits; NqrA, NqrB, NqrC, NqrD, NqrE and NqrF.</text>
</comment>
<comment type="subcellular location">
    <subcellularLocation>
        <location evidence="1">Cell inner membrane</location>
        <topology evidence="1">Multi-pass membrane protein</topology>
    </subcellularLocation>
</comment>
<comment type="similarity">
    <text evidence="1">Belongs to the NqrDE/RnfAE family.</text>
</comment>
<organism>
    <name type="scientific">Vibrio cholerae serotype O1 (strain M66-2)</name>
    <dbReference type="NCBI Taxonomy" id="579112"/>
    <lineage>
        <taxon>Bacteria</taxon>
        <taxon>Pseudomonadati</taxon>
        <taxon>Pseudomonadota</taxon>
        <taxon>Gammaproteobacteria</taxon>
        <taxon>Vibrionales</taxon>
        <taxon>Vibrionaceae</taxon>
        <taxon>Vibrio</taxon>
    </lineage>
</organism>
<accession>C3LQ64</accession>
<feature type="chain" id="PRO_1000134933" description="Na(+)-translocating NADH-quinone reductase subunit D">
    <location>
        <begin position="1"/>
        <end position="210"/>
    </location>
</feature>
<feature type="transmembrane region" description="Helical" evidence="1">
    <location>
        <begin position="42"/>
        <end position="62"/>
    </location>
</feature>
<feature type="transmembrane region" description="Helical" evidence="1">
    <location>
        <begin position="72"/>
        <end position="92"/>
    </location>
</feature>
<feature type="transmembrane region" description="Helical" evidence="1">
    <location>
        <begin position="103"/>
        <end position="123"/>
    </location>
</feature>
<feature type="transmembrane region" description="Helical" evidence="1">
    <location>
        <begin position="131"/>
        <end position="151"/>
    </location>
</feature>
<feature type="transmembrane region" description="Helical" evidence="1">
    <location>
        <begin position="178"/>
        <end position="198"/>
    </location>
</feature>
<proteinExistence type="inferred from homology"/>
<name>NQRD_VIBCM</name>
<protein>
    <recommendedName>
        <fullName evidence="1">Na(+)-translocating NADH-quinone reductase subunit D</fullName>
        <shortName evidence="1">Na(+)-NQR subunit D</shortName>
        <shortName evidence="1">Na(+)-translocating NQR subunit D</shortName>
        <ecNumber evidence="1">7.2.1.1</ecNumber>
    </recommendedName>
    <alternativeName>
        <fullName evidence="1">NQR complex subunit D</fullName>
    </alternativeName>
    <alternativeName>
        <fullName evidence="1">NQR-1 subunit D</fullName>
    </alternativeName>
</protein>
<gene>
    <name evidence="1" type="primary">nqrD</name>
    <name type="ordered locus">VCM66_2215</name>
</gene>
<keyword id="KW-0997">Cell inner membrane</keyword>
<keyword id="KW-1003">Cell membrane</keyword>
<keyword id="KW-0406">Ion transport</keyword>
<keyword id="KW-0472">Membrane</keyword>
<keyword id="KW-0520">NAD</keyword>
<keyword id="KW-0915">Sodium</keyword>
<keyword id="KW-0739">Sodium transport</keyword>
<keyword id="KW-1278">Translocase</keyword>
<keyword id="KW-0812">Transmembrane</keyword>
<keyword id="KW-1133">Transmembrane helix</keyword>
<keyword id="KW-0813">Transport</keyword>
<keyword id="KW-0830">Ubiquinone</keyword>
<dbReference type="EC" id="7.2.1.1" evidence="1"/>
<dbReference type="EMBL" id="CP001233">
    <property type="protein sequence ID" value="ACP06516.1"/>
    <property type="molecule type" value="Genomic_DNA"/>
</dbReference>
<dbReference type="RefSeq" id="WP_000092895.1">
    <property type="nucleotide sequence ID" value="NC_012578.1"/>
</dbReference>
<dbReference type="SMR" id="C3LQ64"/>
<dbReference type="KEGG" id="vcm:VCM66_2215"/>
<dbReference type="HOGENOM" id="CLU_046659_1_1_6"/>
<dbReference type="Proteomes" id="UP000001217">
    <property type="component" value="Chromosome I"/>
</dbReference>
<dbReference type="GO" id="GO:0005886">
    <property type="term" value="C:plasma membrane"/>
    <property type="evidence" value="ECO:0007669"/>
    <property type="project" value="UniProtKB-SubCell"/>
</dbReference>
<dbReference type="GO" id="GO:0016655">
    <property type="term" value="F:oxidoreductase activity, acting on NAD(P)H, quinone or similar compound as acceptor"/>
    <property type="evidence" value="ECO:0007669"/>
    <property type="project" value="UniProtKB-UniRule"/>
</dbReference>
<dbReference type="GO" id="GO:0006814">
    <property type="term" value="P:sodium ion transport"/>
    <property type="evidence" value="ECO:0007669"/>
    <property type="project" value="UniProtKB-UniRule"/>
</dbReference>
<dbReference type="HAMAP" id="MF_00428">
    <property type="entry name" value="NqrD"/>
    <property type="match status" value="1"/>
</dbReference>
<dbReference type="InterPro" id="IPR011292">
    <property type="entry name" value="NqrD"/>
</dbReference>
<dbReference type="InterPro" id="IPR003667">
    <property type="entry name" value="NqrDE/RnfAE"/>
</dbReference>
<dbReference type="NCBIfam" id="TIGR01939">
    <property type="entry name" value="nqrD"/>
    <property type="match status" value="1"/>
</dbReference>
<dbReference type="NCBIfam" id="NF006777">
    <property type="entry name" value="PRK09292.1"/>
    <property type="match status" value="1"/>
</dbReference>
<dbReference type="NCBIfam" id="NF009070">
    <property type="entry name" value="PRK12405.1"/>
    <property type="match status" value="1"/>
</dbReference>
<dbReference type="PANTHER" id="PTHR30586">
    <property type="entry name" value="ELECTRON TRANSPORT COMPLEX PROTEIN RNFE"/>
    <property type="match status" value="1"/>
</dbReference>
<dbReference type="PANTHER" id="PTHR30586:SF1">
    <property type="entry name" value="NA(+)-TRANSLOCATING NADH-QUINONE REDUCTASE SUBUNIT D"/>
    <property type="match status" value="1"/>
</dbReference>
<dbReference type="Pfam" id="PF02508">
    <property type="entry name" value="Rnf-Nqr"/>
    <property type="match status" value="1"/>
</dbReference>
<dbReference type="PIRSF" id="PIRSF006102">
    <property type="entry name" value="NQR_DE"/>
    <property type="match status" value="1"/>
</dbReference>
<evidence type="ECO:0000255" key="1">
    <source>
        <dbReference type="HAMAP-Rule" id="MF_00428"/>
    </source>
</evidence>
<reference key="1">
    <citation type="journal article" date="2008" name="PLoS ONE">
        <title>A recalibrated molecular clock and independent origins for the cholera pandemic clones.</title>
        <authorList>
            <person name="Feng L."/>
            <person name="Reeves P.R."/>
            <person name="Lan R."/>
            <person name="Ren Y."/>
            <person name="Gao C."/>
            <person name="Zhou Z."/>
            <person name="Ren Y."/>
            <person name="Cheng J."/>
            <person name="Wang W."/>
            <person name="Wang J."/>
            <person name="Qian W."/>
            <person name="Li D."/>
            <person name="Wang L."/>
        </authorList>
    </citation>
    <scope>NUCLEOTIDE SEQUENCE [LARGE SCALE GENOMIC DNA]</scope>
    <source>
        <strain>M66-2</strain>
    </source>
</reference>